<protein>
    <recommendedName>
        <fullName evidence="1">Probable protein kinase UbiB</fullName>
        <ecNumber evidence="1">2.7.-.-</ecNumber>
    </recommendedName>
    <alternativeName>
        <fullName evidence="1">Ubiquinone biosynthesis protein UbiB</fullName>
    </alternativeName>
</protein>
<organism>
    <name type="scientific">Pseudomonas putida (strain ATCC 700007 / DSM 6899 / JCM 31910 / BCRC 17059 / LMG 24140 / F1)</name>
    <dbReference type="NCBI Taxonomy" id="351746"/>
    <lineage>
        <taxon>Bacteria</taxon>
        <taxon>Pseudomonadati</taxon>
        <taxon>Pseudomonadota</taxon>
        <taxon>Gammaproteobacteria</taxon>
        <taxon>Pseudomonadales</taxon>
        <taxon>Pseudomonadaceae</taxon>
        <taxon>Pseudomonas</taxon>
    </lineage>
</organism>
<gene>
    <name evidence="1" type="primary">ubiB</name>
    <name type="ordered locus">Pput_4887</name>
</gene>
<feature type="chain" id="PRO_1000060069" description="Probable protein kinase UbiB">
    <location>
        <begin position="1"/>
        <end position="540"/>
    </location>
</feature>
<feature type="transmembrane region" description="Helical" evidence="1">
    <location>
        <begin position="24"/>
        <end position="44"/>
    </location>
</feature>
<feature type="transmembrane region" description="Helical" evidence="1">
    <location>
        <begin position="496"/>
        <end position="516"/>
    </location>
</feature>
<feature type="transmembrane region" description="Helical" evidence="1">
    <location>
        <begin position="518"/>
        <end position="538"/>
    </location>
</feature>
<feature type="domain" description="Protein kinase" evidence="1">
    <location>
        <begin position="126"/>
        <end position="494"/>
    </location>
</feature>
<feature type="active site" description="Proton acceptor" evidence="1">
    <location>
        <position position="289"/>
    </location>
</feature>
<feature type="binding site" evidence="1">
    <location>
        <begin position="132"/>
        <end position="140"/>
    </location>
    <ligand>
        <name>ATP</name>
        <dbReference type="ChEBI" id="CHEBI:30616"/>
    </ligand>
</feature>
<feature type="binding site" evidence="1">
    <location>
        <position position="154"/>
    </location>
    <ligand>
        <name>ATP</name>
        <dbReference type="ChEBI" id="CHEBI:30616"/>
    </ligand>
</feature>
<accession>A5WA47</accession>
<reference key="1">
    <citation type="submission" date="2007-05" db="EMBL/GenBank/DDBJ databases">
        <title>Complete sequence of Pseudomonas putida F1.</title>
        <authorList>
            <consortium name="US DOE Joint Genome Institute"/>
            <person name="Copeland A."/>
            <person name="Lucas S."/>
            <person name="Lapidus A."/>
            <person name="Barry K."/>
            <person name="Detter J.C."/>
            <person name="Glavina del Rio T."/>
            <person name="Hammon N."/>
            <person name="Israni S."/>
            <person name="Dalin E."/>
            <person name="Tice H."/>
            <person name="Pitluck S."/>
            <person name="Chain P."/>
            <person name="Malfatti S."/>
            <person name="Shin M."/>
            <person name="Vergez L."/>
            <person name="Schmutz J."/>
            <person name="Larimer F."/>
            <person name="Land M."/>
            <person name="Hauser L."/>
            <person name="Kyrpides N."/>
            <person name="Lykidis A."/>
            <person name="Parales R."/>
            <person name="Richardson P."/>
        </authorList>
    </citation>
    <scope>NUCLEOTIDE SEQUENCE [LARGE SCALE GENOMIC DNA]</scope>
    <source>
        <strain>ATCC 700007 / DSM 6899 / JCM 31910 / BCRC 17059 / LMG 24140 / F1</strain>
    </source>
</reference>
<comment type="function">
    <text evidence="1">Is probably a protein kinase regulator of UbiI activity which is involved in aerobic coenzyme Q (ubiquinone) biosynthesis.</text>
</comment>
<comment type="pathway">
    <text>Cofactor biosynthesis; ubiquinone biosynthesis [regulation].</text>
</comment>
<comment type="subcellular location">
    <subcellularLocation>
        <location evidence="1">Cell inner membrane</location>
        <topology evidence="1">Multi-pass membrane protein</topology>
    </subcellularLocation>
</comment>
<comment type="similarity">
    <text evidence="1">Belongs to the ABC1 family. UbiB subfamily.</text>
</comment>
<evidence type="ECO:0000255" key="1">
    <source>
        <dbReference type="HAMAP-Rule" id="MF_00414"/>
    </source>
</evidence>
<sequence>MKLLAVRRLFRIQRVVIRYRLDDLLFDQPLLPWWLASLRLLMPWRWLPRKPTELSRGARLRLALQDLGPIFIKFGQLLSTRRDLLPPDIADELMLLQDRVPPFDPKKAVALIEEQLGAKVGEVFSRFDVEPLASASVAQVHAARLKTGEEVVVKVVRPGLKPVIAQDLAWLFLIAKAAERASADARRLHPVEIVGDYEKTIYDELDLLREAANASQLRRNFEDSELMYVPQVYWDLCRPKVLVMERIYGVPVTDMATLADQRTDMKLLAERGVEVFFTQVFRDSFFHADMHPGNIFVSTVKPWSPQYIAIDCGIVGSLTAEDQDYLARNLFAFFKRDYRRVAQLHIDSGWVPANTKVNEFEAAIRTVCEPIFEKPLKDISFGQVLMRLFQTARRFNMEVQPQLVLLQKTLLNIEGLGRQLYPDLDLWSTAKPYLERWMRDRYSPKAVFGNLHSQVEQLPHLAGMTRDLLERLSQPHLHDPQLPERRRQGDRWALRLLGAGLLGGGAVLAAGAAETASLAAPAAWPAWLMLAAGLYLIVRQ</sequence>
<proteinExistence type="inferred from homology"/>
<name>UBIB_PSEP1</name>
<keyword id="KW-0067">ATP-binding</keyword>
<keyword id="KW-0997">Cell inner membrane</keyword>
<keyword id="KW-1003">Cell membrane</keyword>
<keyword id="KW-0418">Kinase</keyword>
<keyword id="KW-0472">Membrane</keyword>
<keyword id="KW-0547">Nucleotide-binding</keyword>
<keyword id="KW-0808">Transferase</keyword>
<keyword id="KW-0812">Transmembrane</keyword>
<keyword id="KW-1133">Transmembrane helix</keyword>
<keyword id="KW-0831">Ubiquinone biosynthesis</keyword>
<dbReference type="EC" id="2.7.-.-" evidence="1"/>
<dbReference type="EMBL" id="CP000712">
    <property type="protein sequence ID" value="ABQ81007.1"/>
    <property type="molecule type" value="Genomic_DNA"/>
</dbReference>
<dbReference type="SMR" id="A5WA47"/>
<dbReference type="KEGG" id="ppf:Pput_4887"/>
<dbReference type="eggNOG" id="COG0661">
    <property type="taxonomic scope" value="Bacteria"/>
</dbReference>
<dbReference type="HOGENOM" id="CLU_006533_0_0_6"/>
<dbReference type="UniPathway" id="UPA00232"/>
<dbReference type="GO" id="GO:0005886">
    <property type="term" value="C:plasma membrane"/>
    <property type="evidence" value="ECO:0007669"/>
    <property type="project" value="UniProtKB-SubCell"/>
</dbReference>
<dbReference type="GO" id="GO:0005524">
    <property type="term" value="F:ATP binding"/>
    <property type="evidence" value="ECO:0007669"/>
    <property type="project" value="UniProtKB-KW"/>
</dbReference>
<dbReference type="GO" id="GO:0004672">
    <property type="term" value="F:protein kinase activity"/>
    <property type="evidence" value="ECO:0007669"/>
    <property type="project" value="UniProtKB-UniRule"/>
</dbReference>
<dbReference type="GO" id="GO:0010795">
    <property type="term" value="P:regulation of ubiquinone biosynthetic process"/>
    <property type="evidence" value="ECO:0007669"/>
    <property type="project" value="UniProtKB-UniRule"/>
</dbReference>
<dbReference type="GO" id="GO:0006744">
    <property type="term" value="P:ubiquinone biosynthetic process"/>
    <property type="evidence" value="ECO:0007669"/>
    <property type="project" value="UniProtKB-UniPathway"/>
</dbReference>
<dbReference type="CDD" id="cd13972">
    <property type="entry name" value="UbiB"/>
    <property type="match status" value="1"/>
</dbReference>
<dbReference type="HAMAP" id="MF_00414">
    <property type="entry name" value="UbiB"/>
    <property type="match status" value="1"/>
</dbReference>
<dbReference type="InterPro" id="IPR004147">
    <property type="entry name" value="ABC1_dom"/>
</dbReference>
<dbReference type="InterPro" id="IPR011009">
    <property type="entry name" value="Kinase-like_dom_sf"/>
</dbReference>
<dbReference type="InterPro" id="IPR010232">
    <property type="entry name" value="UbiB"/>
</dbReference>
<dbReference type="InterPro" id="IPR045308">
    <property type="entry name" value="UbiB_bact"/>
</dbReference>
<dbReference type="InterPro" id="IPR050154">
    <property type="entry name" value="UbiB_kinase"/>
</dbReference>
<dbReference type="NCBIfam" id="NF003404">
    <property type="entry name" value="PRK04750.1"/>
    <property type="match status" value="1"/>
</dbReference>
<dbReference type="NCBIfam" id="TIGR01982">
    <property type="entry name" value="UbiB"/>
    <property type="match status" value="1"/>
</dbReference>
<dbReference type="PANTHER" id="PTHR10566">
    <property type="entry name" value="CHAPERONE-ACTIVITY OF BC1 COMPLEX CABC1 -RELATED"/>
    <property type="match status" value="1"/>
</dbReference>
<dbReference type="PANTHER" id="PTHR10566:SF113">
    <property type="entry name" value="PROTEIN ACTIVITY OF BC1 COMPLEX KINASE 7, CHLOROPLASTIC"/>
    <property type="match status" value="1"/>
</dbReference>
<dbReference type="Pfam" id="PF03109">
    <property type="entry name" value="ABC1"/>
    <property type="match status" value="1"/>
</dbReference>
<dbReference type="SUPFAM" id="SSF56112">
    <property type="entry name" value="Protein kinase-like (PK-like)"/>
    <property type="match status" value="1"/>
</dbReference>